<gene>
    <name evidence="1" type="primary">yhbP</name>
    <name type="ordered locus">SPC_3341</name>
</gene>
<name>YHBP_SALPC</name>
<sequence length="147" mass="16716">MDTLTAIGRWLAKQHVVTWCVHHEGELWCANAFYLFDAQNVALYLLTDDKTRHAQMSGACAPVAGTVNGQPKTVARIRGVQFKGEIRRLEGQESDAVRKAYLRRFPVARVLPAPVWEIRLDEIKFTDNTLGFGKKLHWLRDSRAQQA</sequence>
<protein>
    <recommendedName>
        <fullName evidence="1">UPF0306 protein YhbP</fullName>
    </recommendedName>
</protein>
<reference key="1">
    <citation type="journal article" date="2009" name="PLoS ONE">
        <title>Salmonella paratyphi C: genetic divergence from Salmonella choleraesuis and pathogenic convergence with Salmonella typhi.</title>
        <authorList>
            <person name="Liu W.-Q."/>
            <person name="Feng Y."/>
            <person name="Wang Y."/>
            <person name="Zou Q.-H."/>
            <person name="Chen F."/>
            <person name="Guo J.-T."/>
            <person name="Peng Y.-H."/>
            <person name="Jin Y."/>
            <person name="Li Y.-G."/>
            <person name="Hu S.-N."/>
            <person name="Johnston R.N."/>
            <person name="Liu G.-R."/>
            <person name="Liu S.-L."/>
        </authorList>
    </citation>
    <scope>NUCLEOTIDE SEQUENCE [LARGE SCALE GENOMIC DNA]</scope>
    <source>
        <strain>RKS4594</strain>
    </source>
</reference>
<proteinExistence type="inferred from homology"/>
<comment type="similarity">
    <text evidence="1">Belongs to the UPF0306 family.</text>
</comment>
<evidence type="ECO:0000255" key="1">
    <source>
        <dbReference type="HAMAP-Rule" id="MF_00764"/>
    </source>
</evidence>
<accession>C0PZ38</accession>
<dbReference type="EMBL" id="CP000857">
    <property type="protein sequence ID" value="ACN47426.1"/>
    <property type="molecule type" value="Genomic_DNA"/>
</dbReference>
<dbReference type="RefSeq" id="WP_000380405.1">
    <property type="nucleotide sequence ID" value="NC_012125.1"/>
</dbReference>
<dbReference type="SMR" id="C0PZ38"/>
<dbReference type="KEGG" id="sei:SPC_3341"/>
<dbReference type="HOGENOM" id="CLU_105087_3_0_6"/>
<dbReference type="Proteomes" id="UP000001599">
    <property type="component" value="Chromosome"/>
</dbReference>
<dbReference type="Gene3D" id="2.30.110.10">
    <property type="entry name" value="Electron Transport, Fmn-binding Protein, Chain A"/>
    <property type="match status" value="1"/>
</dbReference>
<dbReference type="HAMAP" id="MF_00764">
    <property type="entry name" value="UPF0306"/>
    <property type="match status" value="1"/>
</dbReference>
<dbReference type="InterPro" id="IPR012349">
    <property type="entry name" value="Split_barrel_FMN-bd"/>
</dbReference>
<dbReference type="InterPro" id="IPR011194">
    <property type="entry name" value="UPF0306"/>
</dbReference>
<dbReference type="NCBIfam" id="NF002900">
    <property type="entry name" value="PRK03467.1"/>
    <property type="match status" value="1"/>
</dbReference>
<dbReference type="PIRSF" id="PIRSF009554">
    <property type="entry name" value="UCP009554"/>
    <property type="match status" value="1"/>
</dbReference>
<dbReference type="SUPFAM" id="SSF50475">
    <property type="entry name" value="FMN-binding split barrel"/>
    <property type="match status" value="1"/>
</dbReference>
<feature type="chain" id="PRO_1000148424" description="UPF0306 protein YhbP">
    <location>
        <begin position="1"/>
        <end position="147"/>
    </location>
</feature>
<organism>
    <name type="scientific">Salmonella paratyphi C (strain RKS4594)</name>
    <dbReference type="NCBI Taxonomy" id="476213"/>
    <lineage>
        <taxon>Bacteria</taxon>
        <taxon>Pseudomonadati</taxon>
        <taxon>Pseudomonadota</taxon>
        <taxon>Gammaproteobacteria</taxon>
        <taxon>Enterobacterales</taxon>
        <taxon>Enterobacteriaceae</taxon>
        <taxon>Salmonella</taxon>
    </lineage>
</organism>